<proteinExistence type="inferred from homology"/>
<organism>
    <name type="scientific">Mycobacterium bovis (strain ATCC BAA-935 / AF2122/97)</name>
    <dbReference type="NCBI Taxonomy" id="233413"/>
    <lineage>
        <taxon>Bacteria</taxon>
        <taxon>Bacillati</taxon>
        <taxon>Actinomycetota</taxon>
        <taxon>Actinomycetes</taxon>
        <taxon>Mycobacteriales</taxon>
        <taxon>Mycobacteriaceae</taxon>
        <taxon>Mycobacterium</taxon>
        <taxon>Mycobacterium tuberculosis complex</taxon>
    </lineage>
</organism>
<evidence type="ECO:0000255" key="1">
    <source>
        <dbReference type="HAMAP-Rule" id="MF_00101"/>
    </source>
</evidence>
<sequence length="130" mass="14003">MGIVGVGIDLVSIPDFAEQVDQPGTVFAETFTPGERRDASDKSSSAARHLAARWAAKEAVIKAWSGSRFAQRPVLPEDIHRDIEVVTDMWGRPRVRLTGAIAEYLADVTIHVSLTHEGDTAAAVAILEAP</sequence>
<protein>
    <recommendedName>
        <fullName evidence="1">Holo-[acyl-carrier-protein] synthase</fullName>
        <shortName evidence="1">Holo-ACP synthase</shortName>
        <ecNumber evidence="1">2.7.8.7</ecNumber>
    </recommendedName>
    <alternativeName>
        <fullName evidence="1">4'-phosphopantetheinyl transferase AcpS</fullName>
    </alternativeName>
</protein>
<dbReference type="EC" id="2.7.8.7" evidence="1"/>
<dbReference type="EMBL" id="LT708304">
    <property type="protein sequence ID" value="SIU01168.1"/>
    <property type="molecule type" value="Genomic_DNA"/>
</dbReference>
<dbReference type="RefSeq" id="NP_856197.1">
    <property type="nucleotide sequence ID" value="NC_002945.3"/>
</dbReference>
<dbReference type="RefSeq" id="WP_003412952.1">
    <property type="nucleotide sequence ID" value="NC_002945.4"/>
</dbReference>
<dbReference type="SMR" id="P0A4W9"/>
<dbReference type="KEGG" id="mbo:BQ2027_MB2552C"/>
<dbReference type="PATRIC" id="fig|233413.5.peg.2807"/>
<dbReference type="Proteomes" id="UP000001419">
    <property type="component" value="Chromosome"/>
</dbReference>
<dbReference type="GO" id="GO:0005737">
    <property type="term" value="C:cytoplasm"/>
    <property type="evidence" value="ECO:0007669"/>
    <property type="project" value="UniProtKB-SubCell"/>
</dbReference>
<dbReference type="GO" id="GO:0008897">
    <property type="term" value="F:holo-[acyl-carrier-protein] synthase activity"/>
    <property type="evidence" value="ECO:0007669"/>
    <property type="project" value="UniProtKB-UniRule"/>
</dbReference>
<dbReference type="GO" id="GO:0000287">
    <property type="term" value="F:magnesium ion binding"/>
    <property type="evidence" value="ECO:0007669"/>
    <property type="project" value="UniProtKB-UniRule"/>
</dbReference>
<dbReference type="GO" id="GO:0006633">
    <property type="term" value="P:fatty acid biosynthetic process"/>
    <property type="evidence" value="ECO:0007669"/>
    <property type="project" value="UniProtKB-UniRule"/>
</dbReference>
<dbReference type="Gene3D" id="3.90.470.20">
    <property type="entry name" value="4'-phosphopantetheinyl transferase domain"/>
    <property type="match status" value="1"/>
</dbReference>
<dbReference type="HAMAP" id="MF_00101">
    <property type="entry name" value="AcpS"/>
    <property type="match status" value="1"/>
</dbReference>
<dbReference type="InterPro" id="IPR008278">
    <property type="entry name" value="4-PPantetheinyl_Trfase_dom"/>
</dbReference>
<dbReference type="InterPro" id="IPR037143">
    <property type="entry name" value="4-PPantetheinyl_Trfase_dom_sf"/>
</dbReference>
<dbReference type="InterPro" id="IPR002582">
    <property type="entry name" value="ACPS"/>
</dbReference>
<dbReference type="InterPro" id="IPR004568">
    <property type="entry name" value="Ppantetheine-prot_Trfase_dom"/>
</dbReference>
<dbReference type="NCBIfam" id="TIGR00556">
    <property type="entry name" value="pantethn_trn"/>
    <property type="match status" value="1"/>
</dbReference>
<dbReference type="NCBIfam" id="NF000831">
    <property type="entry name" value="PRK00070.3-1"/>
    <property type="match status" value="1"/>
</dbReference>
<dbReference type="Pfam" id="PF01648">
    <property type="entry name" value="ACPS"/>
    <property type="match status" value="1"/>
</dbReference>
<dbReference type="SUPFAM" id="SSF56214">
    <property type="entry name" value="4'-phosphopantetheinyl transferase"/>
    <property type="match status" value="1"/>
</dbReference>
<keyword id="KW-0963">Cytoplasm</keyword>
<keyword id="KW-0275">Fatty acid biosynthesis</keyword>
<keyword id="KW-0276">Fatty acid metabolism</keyword>
<keyword id="KW-0444">Lipid biosynthesis</keyword>
<keyword id="KW-0443">Lipid metabolism</keyword>
<keyword id="KW-0460">Magnesium</keyword>
<keyword id="KW-0479">Metal-binding</keyword>
<keyword id="KW-1185">Reference proteome</keyword>
<keyword id="KW-0808">Transferase</keyword>
<reference key="1">
    <citation type="journal article" date="2003" name="Proc. Natl. Acad. Sci. U.S.A.">
        <title>The complete genome sequence of Mycobacterium bovis.</title>
        <authorList>
            <person name="Garnier T."/>
            <person name="Eiglmeier K."/>
            <person name="Camus J.-C."/>
            <person name="Medina N."/>
            <person name="Mansoor H."/>
            <person name="Pryor M."/>
            <person name="Duthoy S."/>
            <person name="Grondin S."/>
            <person name="Lacroix C."/>
            <person name="Monsempe C."/>
            <person name="Simon S."/>
            <person name="Harris B."/>
            <person name="Atkin R."/>
            <person name="Doggett J."/>
            <person name="Mayes R."/>
            <person name="Keating L."/>
            <person name="Wheeler P.R."/>
            <person name="Parkhill J."/>
            <person name="Barrell B.G."/>
            <person name="Cole S.T."/>
            <person name="Gordon S.V."/>
            <person name="Hewinson R.G."/>
        </authorList>
    </citation>
    <scope>NUCLEOTIDE SEQUENCE [LARGE SCALE GENOMIC DNA]</scope>
    <source>
        <strain>ATCC BAA-935 / AF2122/97</strain>
    </source>
</reference>
<reference key="2">
    <citation type="journal article" date="2017" name="Genome Announc.">
        <title>Updated reference genome sequence and annotation of Mycobacterium bovis AF2122/97.</title>
        <authorList>
            <person name="Malone K.M."/>
            <person name="Farrell D."/>
            <person name="Stuber T.P."/>
            <person name="Schubert O.T."/>
            <person name="Aebersold R."/>
            <person name="Robbe-Austerman S."/>
            <person name="Gordon S.V."/>
        </authorList>
    </citation>
    <scope>NUCLEOTIDE SEQUENCE [LARGE SCALE GENOMIC DNA]</scope>
    <scope>GENOME REANNOTATION</scope>
    <source>
        <strain>ATCC BAA-935 / AF2122/97</strain>
    </source>
</reference>
<feature type="chain" id="PRO_0000175666" description="Holo-[acyl-carrier-protein] synthase">
    <location>
        <begin position="1"/>
        <end position="130"/>
    </location>
</feature>
<feature type="binding site" evidence="1">
    <location>
        <position position="9"/>
    </location>
    <ligand>
        <name>Mg(2+)</name>
        <dbReference type="ChEBI" id="CHEBI:18420"/>
    </ligand>
</feature>
<feature type="binding site" evidence="1">
    <location>
        <position position="58"/>
    </location>
    <ligand>
        <name>Mg(2+)</name>
        <dbReference type="ChEBI" id="CHEBI:18420"/>
    </ligand>
</feature>
<accession>P0A4W9</accession>
<accession>A0A1R3Y1V4</accession>
<accession>O53228</accession>
<accession>X2BL12</accession>
<name>ACPS_MYCBO</name>
<comment type="function">
    <text evidence="1">Transfers the 4'-phosphopantetheine moiety from coenzyme A to a Ser of acyl-carrier-protein.</text>
</comment>
<comment type="catalytic activity">
    <reaction evidence="1">
        <text>apo-[ACP] + CoA = holo-[ACP] + adenosine 3',5'-bisphosphate + H(+)</text>
        <dbReference type="Rhea" id="RHEA:12068"/>
        <dbReference type="Rhea" id="RHEA-COMP:9685"/>
        <dbReference type="Rhea" id="RHEA-COMP:9690"/>
        <dbReference type="ChEBI" id="CHEBI:15378"/>
        <dbReference type="ChEBI" id="CHEBI:29999"/>
        <dbReference type="ChEBI" id="CHEBI:57287"/>
        <dbReference type="ChEBI" id="CHEBI:58343"/>
        <dbReference type="ChEBI" id="CHEBI:64479"/>
        <dbReference type="EC" id="2.7.8.7"/>
    </reaction>
</comment>
<comment type="cofactor">
    <cofactor evidence="1">
        <name>Mg(2+)</name>
        <dbReference type="ChEBI" id="CHEBI:18420"/>
    </cofactor>
</comment>
<comment type="subcellular location">
    <subcellularLocation>
        <location evidence="1">Cytoplasm</location>
    </subcellularLocation>
</comment>
<comment type="similarity">
    <text evidence="1">Belongs to the P-Pant transferase superfamily. AcpS family.</text>
</comment>
<gene>
    <name evidence="1" type="primary">acpS</name>
    <name type="ordered locus">BQ2027_MB2552C</name>
</gene>